<evidence type="ECO:0000255" key="1">
    <source>
        <dbReference type="HAMAP-Rule" id="MF_00015"/>
    </source>
</evidence>
<reference key="1">
    <citation type="submission" date="2008-05" db="EMBL/GenBank/DDBJ databases">
        <title>Genome sequence of Clostridium botulinum Ba4 strain 657.</title>
        <authorList>
            <person name="Shrivastava S."/>
            <person name="Brown J.L."/>
            <person name="Bruce D."/>
            <person name="Detter C."/>
            <person name="Munk C."/>
            <person name="Smith L.A."/>
            <person name="Smith T.J."/>
            <person name="Sutton G."/>
            <person name="Brettin T.S."/>
        </authorList>
    </citation>
    <scope>NUCLEOTIDE SEQUENCE [LARGE SCALE GENOMIC DNA]</scope>
    <source>
        <strain>657 / Type Ba4</strain>
    </source>
</reference>
<sequence>MNKSRIDKQNEVYNFIKLQIKEKGYPPSVREICKAVGLSSTSSVHFHLKRLEKEGLIKRDSSKTRAIEIVDPTSKKEVINVPIVGTITAGNPILAIENIEDVFPLPIDYVKNTKDLFMLKVSGESMIEAGILDGDLAIIEKTDSANNGDIVVALIDNEATLKRFFKESSYIRLQPENKSMKPIILENCKVLGRLVGIYRKY</sequence>
<organism>
    <name type="scientific">Clostridium botulinum (strain 657 / Type Ba4)</name>
    <dbReference type="NCBI Taxonomy" id="515621"/>
    <lineage>
        <taxon>Bacteria</taxon>
        <taxon>Bacillati</taxon>
        <taxon>Bacillota</taxon>
        <taxon>Clostridia</taxon>
        <taxon>Eubacteriales</taxon>
        <taxon>Clostridiaceae</taxon>
        <taxon>Clostridium</taxon>
    </lineage>
</organism>
<gene>
    <name evidence="1" type="primary">lexA</name>
    <name type="ordered locus">CLJ_B1973</name>
</gene>
<protein>
    <recommendedName>
        <fullName evidence="1">LexA repressor</fullName>
        <ecNumber evidence="1">3.4.21.88</ecNumber>
    </recommendedName>
</protein>
<dbReference type="EC" id="3.4.21.88" evidence="1"/>
<dbReference type="EMBL" id="CP001083">
    <property type="protein sequence ID" value="ACQ52069.1"/>
    <property type="molecule type" value="Genomic_DNA"/>
</dbReference>
<dbReference type="RefSeq" id="WP_003358834.1">
    <property type="nucleotide sequence ID" value="NC_012658.1"/>
</dbReference>
<dbReference type="SMR" id="C3KX30"/>
<dbReference type="MEROPS" id="S24.001"/>
<dbReference type="KEGG" id="cbi:CLJ_B1973"/>
<dbReference type="HOGENOM" id="CLU_066192_45_1_9"/>
<dbReference type="Proteomes" id="UP000002333">
    <property type="component" value="Chromosome"/>
</dbReference>
<dbReference type="GO" id="GO:0003677">
    <property type="term" value="F:DNA binding"/>
    <property type="evidence" value="ECO:0007669"/>
    <property type="project" value="UniProtKB-UniRule"/>
</dbReference>
<dbReference type="GO" id="GO:0004252">
    <property type="term" value="F:serine-type endopeptidase activity"/>
    <property type="evidence" value="ECO:0007669"/>
    <property type="project" value="UniProtKB-UniRule"/>
</dbReference>
<dbReference type="GO" id="GO:0006281">
    <property type="term" value="P:DNA repair"/>
    <property type="evidence" value="ECO:0007669"/>
    <property type="project" value="UniProtKB-UniRule"/>
</dbReference>
<dbReference type="GO" id="GO:0006260">
    <property type="term" value="P:DNA replication"/>
    <property type="evidence" value="ECO:0007669"/>
    <property type="project" value="UniProtKB-UniRule"/>
</dbReference>
<dbReference type="GO" id="GO:0045892">
    <property type="term" value="P:negative regulation of DNA-templated transcription"/>
    <property type="evidence" value="ECO:0007669"/>
    <property type="project" value="UniProtKB-UniRule"/>
</dbReference>
<dbReference type="GO" id="GO:0006508">
    <property type="term" value="P:proteolysis"/>
    <property type="evidence" value="ECO:0007669"/>
    <property type="project" value="InterPro"/>
</dbReference>
<dbReference type="GO" id="GO:0009432">
    <property type="term" value="P:SOS response"/>
    <property type="evidence" value="ECO:0007669"/>
    <property type="project" value="UniProtKB-UniRule"/>
</dbReference>
<dbReference type="CDD" id="cd00090">
    <property type="entry name" value="HTH_ARSR"/>
    <property type="match status" value="1"/>
</dbReference>
<dbReference type="CDD" id="cd06529">
    <property type="entry name" value="S24_LexA-like"/>
    <property type="match status" value="1"/>
</dbReference>
<dbReference type="FunFam" id="1.10.10.10:FF:000009">
    <property type="entry name" value="LexA repressor"/>
    <property type="match status" value="1"/>
</dbReference>
<dbReference type="FunFam" id="2.10.109.10:FF:000001">
    <property type="entry name" value="LexA repressor"/>
    <property type="match status" value="1"/>
</dbReference>
<dbReference type="Gene3D" id="2.10.109.10">
    <property type="entry name" value="Umud Fragment, subunit A"/>
    <property type="match status" value="1"/>
</dbReference>
<dbReference type="Gene3D" id="1.10.10.10">
    <property type="entry name" value="Winged helix-like DNA-binding domain superfamily/Winged helix DNA-binding domain"/>
    <property type="match status" value="1"/>
</dbReference>
<dbReference type="HAMAP" id="MF_00015">
    <property type="entry name" value="LexA"/>
    <property type="match status" value="1"/>
</dbReference>
<dbReference type="InterPro" id="IPR011991">
    <property type="entry name" value="ArsR-like_HTH"/>
</dbReference>
<dbReference type="InterPro" id="IPR006200">
    <property type="entry name" value="LexA"/>
</dbReference>
<dbReference type="InterPro" id="IPR039418">
    <property type="entry name" value="LexA-like"/>
</dbReference>
<dbReference type="InterPro" id="IPR036286">
    <property type="entry name" value="LexA/Signal_pep-like_sf"/>
</dbReference>
<dbReference type="InterPro" id="IPR006199">
    <property type="entry name" value="LexA_DNA-bd_dom"/>
</dbReference>
<dbReference type="InterPro" id="IPR050077">
    <property type="entry name" value="LexA_repressor"/>
</dbReference>
<dbReference type="InterPro" id="IPR006197">
    <property type="entry name" value="Peptidase_S24_LexA"/>
</dbReference>
<dbReference type="InterPro" id="IPR015927">
    <property type="entry name" value="Peptidase_S24_S26A/B/C"/>
</dbReference>
<dbReference type="InterPro" id="IPR036388">
    <property type="entry name" value="WH-like_DNA-bd_sf"/>
</dbReference>
<dbReference type="InterPro" id="IPR036390">
    <property type="entry name" value="WH_DNA-bd_sf"/>
</dbReference>
<dbReference type="NCBIfam" id="TIGR00498">
    <property type="entry name" value="lexA"/>
    <property type="match status" value="1"/>
</dbReference>
<dbReference type="PANTHER" id="PTHR33516">
    <property type="entry name" value="LEXA REPRESSOR"/>
    <property type="match status" value="1"/>
</dbReference>
<dbReference type="PANTHER" id="PTHR33516:SF2">
    <property type="entry name" value="LEXA REPRESSOR-RELATED"/>
    <property type="match status" value="1"/>
</dbReference>
<dbReference type="Pfam" id="PF01726">
    <property type="entry name" value="LexA_DNA_bind"/>
    <property type="match status" value="1"/>
</dbReference>
<dbReference type="Pfam" id="PF00717">
    <property type="entry name" value="Peptidase_S24"/>
    <property type="match status" value="1"/>
</dbReference>
<dbReference type="PRINTS" id="PR00726">
    <property type="entry name" value="LEXASERPTASE"/>
</dbReference>
<dbReference type="SUPFAM" id="SSF51306">
    <property type="entry name" value="LexA/Signal peptidase"/>
    <property type="match status" value="1"/>
</dbReference>
<dbReference type="SUPFAM" id="SSF46785">
    <property type="entry name" value="Winged helix' DNA-binding domain"/>
    <property type="match status" value="1"/>
</dbReference>
<comment type="function">
    <text evidence="1">Represses a number of genes involved in the response to DNA damage (SOS response), including recA and lexA. In the presence of single-stranded DNA, RecA interacts with LexA causing an autocatalytic cleavage which disrupts the DNA-binding part of LexA, leading to derepression of the SOS regulon and eventually DNA repair.</text>
</comment>
<comment type="catalytic activity">
    <reaction evidence="1">
        <text>Hydrolysis of Ala-|-Gly bond in repressor LexA.</text>
        <dbReference type="EC" id="3.4.21.88"/>
    </reaction>
</comment>
<comment type="subunit">
    <text evidence="1">Homodimer.</text>
</comment>
<comment type="similarity">
    <text evidence="1">Belongs to the peptidase S24 family.</text>
</comment>
<proteinExistence type="inferred from homology"/>
<name>LEXA_CLOB6</name>
<keyword id="KW-0068">Autocatalytic cleavage</keyword>
<keyword id="KW-0227">DNA damage</keyword>
<keyword id="KW-0234">DNA repair</keyword>
<keyword id="KW-0235">DNA replication</keyword>
<keyword id="KW-0238">DNA-binding</keyword>
<keyword id="KW-0378">Hydrolase</keyword>
<keyword id="KW-0678">Repressor</keyword>
<keyword id="KW-0742">SOS response</keyword>
<keyword id="KW-0804">Transcription</keyword>
<keyword id="KW-0805">Transcription regulation</keyword>
<feature type="chain" id="PRO_1000201817" description="LexA repressor">
    <location>
        <begin position="1"/>
        <end position="201"/>
    </location>
</feature>
<feature type="DNA-binding region" description="H-T-H motif" evidence="1">
    <location>
        <begin position="29"/>
        <end position="49"/>
    </location>
</feature>
<feature type="active site" description="For autocatalytic cleavage activity" evidence="1">
    <location>
        <position position="125"/>
    </location>
</feature>
<feature type="active site" description="For autocatalytic cleavage activity" evidence="1">
    <location>
        <position position="162"/>
    </location>
</feature>
<feature type="site" description="Cleavage; by autolysis" evidence="1">
    <location>
        <begin position="89"/>
        <end position="90"/>
    </location>
</feature>
<accession>C3KX30</accession>